<gene>
    <name evidence="1" type="primary">rbfA</name>
    <name type="ordered locus">Bamb_1383</name>
</gene>
<proteinExistence type="inferred from homology"/>
<dbReference type="EMBL" id="CP000440">
    <property type="protein sequence ID" value="ABI86941.1"/>
    <property type="molecule type" value="Genomic_DNA"/>
</dbReference>
<dbReference type="RefSeq" id="WP_006752288.1">
    <property type="nucleotide sequence ID" value="NZ_CP009798.1"/>
</dbReference>
<dbReference type="SMR" id="Q0BFY2"/>
<dbReference type="GeneID" id="93083216"/>
<dbReference type="KEGG" id="bam:Bamb_1383"/>
<dbReference type="PATRIC" id="fig|339670.21.peg.159"/>
<dbReference type="eggNOG" id="COG0858">
    <property type="taxonomic scope" value="Bacteria"/>
</dbReference>
<dbReference type="Proteomes" id="UP000000662">
    <property type="component" value="Chromosome 1"/>
</dbReference>
<dbReference type="GO" id="GO:0005829">
    <property type="term" value="C:cytosol"/>
    <property type="evidence" value="ECO:0007669"/>
    <property type="project" value="TreeGrafter"/>
</dbReference>
<dbReference type="GO" id="GO:0043024">
    <property type="term" value="F:ribosomal small subunit binding"/>
    <property type="evidence" value="ECO:0007669"/>
    <property type="project" value="TreeGrafter"/>
</dbReference>
<dbReference type="GO" id="GO:0030490">
    <property type="term" value="P:maturation of SSU-rRNA"/>
    <property type="evidence" value="ECO:0007669"/>
    <property type="project" value="UniProtKB-UniRule"/>
</dbReference>
<dbReference type="Gene3D" id="3.30.300.20">
    <property type="match status" value="1"/>
</dbReference>
<dbReference type="HAMAP" id="MF_00003">
    <property type="entry name" value="RbfA"/>
    <property type="match status" value="1"/>
</dbReference>
<dbReference type="InterPro" id="IPR015946">
    <property type="entry name" value="KH_dom-like_a/b"/>
</dbReference>
<dbReference type="InterPro" id="IPR000238">
    <property type="entry name" value="RbfA"/>
</dbReference>
<dbReference type="InterPro" id="IPR023799">
    <property type="entry name" value="RbfA_dom_sf"/>
</dbReference>
<dbReference type="NCBIfam" id="TIGR00082">
    <property type="entry name" value="rbfA"/>
    <property type="match status" value="1"/>
</dbReference>
<dbReference type="PANTHER" id="PTHR33515">
    <property type="entry name" value="RIBOSOME-BINDING FACTOR A, CHLOROPLASTIC-RELATED"/>
    <property type="match status" value="1"/>
</dbReference>
<dbReference type="PANTHER" id="PTHR33515:SF1">
    <property type="entry name" value="RIBOSOME-BINDING FACTOR A, CHLOROPLASTIC-RELATED"/>
    <property type="match status" value="1"/>
</dbReference>
<dbReference type="Pfam" id="PF02033">
    <property type="entry name" value="RBFA"/>
    <property type="match status" value="1"/>
</dbReference>
<dbReference type="SUPFAM" id="SSF89919">
    <property type="entry name" value="Ribosome-binding factor A, RbfA"/>
    <property type="match status" value="1"/>
</dbReference>
<keyword id="KW-0963">Cytoplasm</keyword>
<keyword id="KW-0690">Ribosome biogenesis</keyword>
<comment type="function">
    <text evidence="1">One of several proteins that assist in the late maturation steps of the functional core of the 30S ribosomal subunit. Associates with free 30S ribosomal subunits (but not with 30S subunits that are part of 70S ribosomes or polysomes). Required for efficient processing of 16S rRNA. May interact with the 5'-terminal helix region of 16S rRNA.</text>
</comment>
<comment type="subunit">
    <text evidence="1">Monomer. Binds 30S ribosomal subunits, but not 50S ribosomal subunits or 70S ribosomes.</text>
</comment>
<comment type="subcellular location">
    <subcellularLocation>
        <location evidence="1">Cytoplasm</location>
    </subcellularLocation>
</comment>
<comment type="similarity">
    <text evidence="1">Belongs to the RbfA family.</text>
</comment>
<accession>Q0BFY2</accession>
<evidence type="ECO:0000255" key="1">
    <source>
        <dbReference type="HAMAP-Rule" id="MF_00003"/>
    </source>
</evidence>
<evidence type="ECO:0000256" key="2">
    <source>
        <dbReference type="SAM" id="MobiDB-lite"/>
    </source>
</evidence>
<protein>
    <recommendedName>
        <fullName evidence="1">Ribosome-binding factor A</fullName>
    </recommendedName>
</protein>
<feature type="chain" id="PRO_1000000082" description="Ribosome-binding factor A">
    <location>
        <begin position="1"/>
        <end position="132"/>
    </location>
</feature>
<feature type="region of interest" description="Disordered" evidence="2">
    <location>
        <begin position="113"/>
        <end position="132"/>
    </location>
</feature>
<organism>
    <name type="scientific">Burkholderia ambifaria (strain ATCC BAA-244 / DSM 16087 / CCUG 44356 / LMG 19182 / AMMD)</name>
    <name type="common">Burkholderia cepacia (strain AMMD)</name>
    <dbReference type="NCBI Taxonomy" id="339670"/>
    <lineage>
        <taxon>Bacteria</taxon>
        <taxon>Pseudomonadati</taxon>
        <taxon>Pseudomonadota</taxon>
        <taxon>Betaproteobacteria</taxon>
        <taxon>Burkholderiales</taxon>
        <taxon>Burkholderiaceae</taxon>
        <taxon>Burkholderia</taxon>
        <taxon>Burkholderia cepacia complex</taxon>
    </lineage>
</organism>
<sequence>MSRKRTSPNRNVQIADQIQRDLSELIMREVKDPRIGIVTIQSVELTPDYAHAKIYFTALTGDPDKTQEALNHASGHLHNLLFKRLHIHTVPTLHFHYDQTIEKAVEMSRLIKEANSTRAKDDDEADAPAKDD</sequence>
<reference key="1">
    <citation type="submission" date="2006-08" db="EMBL/GenBank/DDBJ databases">
        <title>Complete sequence of chromosome 1 of Burkholderia cepacia AMMD.</title>
        <authorList>
            <person name="Copeland A."/>
            <person name="Lucas S."/>
            <person name="Lapidus A."/>
            <person name="Barry K."/>
            <person name="Detter J.C."/>
            <person name="Glavina del Rio T."/>
            <person name="Hammon N."/>
            <person name="Israni S."/>
            <person name="Pitluck S."/>
            <person name="Bruce D."/>
            <person name="Chain P."/>
            <person name="Malfatti S."/>
            <person name="Shin M."/>
            <person name="Vergez L."/>
            <person name="Schmutz J."/>
            <person name="Larimer F."/>
            <person name="Land M."/>
            <person name="Hauser L."/>
            <person name="Kyrpides N."/>
            <person name="Kim E."/>
            <person name="Parke J."/>
            <person name="Coenye T."/>
            <person name="Konstantinidis K."/>
            <person name="Ramette A."/>
            <person name="Tiedje J."/>
            <person name="Richardson P."/>
        </authorList>
    </citation>
    <scope>NUCLEOTIDE SEQUENCE [LARGE SCALE GENOMIC DNA]</scope>
    <source>
        <strain>ATCC BAA-244 / DSM 16087 / CCUG 44356 / LMG 19182 / AMMD</strain>
    </source>
</reference>
<name>RBFA_BURCM</name>